<organism>
    <name type="scientific">Corynebacterium jeikeium (strain K411)</name>
    <dbReference type="NCBI Taxonomy" id="306537"/>
    <lineage>
        <taxon>Bacteria</taxon>
        <taxon>Bacillati</taxon>
        <taxon>Actinomycetota</taxon>
        <taxon>Actinomycetes</taxon>
        <taxon>Mycobacteriales</taxon>
        <taxon>Corynebacteriaceae</taxon>
        <taxon>Corynebacterium</taxon>
    </lineage>
</organism>
<gene>
    <name evidence="1" type="primary">nrdR</name>
    <name type="ordered locus">jk1105</name>
</gene>
<keyword id="KW-0067">ATP-binding</keyword>
<keyword id="KW-0238">DNA-binding</keyword>
<keyword id="KW-0479">Metal-binding</keyword>
<keyword id="KW-0547">Nucleotide-binding</keyword>
<keyword id="KW-1185">Reference proteome</keyword>
<keyword id="KW-0678">Repressor</keyword>
<keyword id="KW-0804">Transcription</keyword>
<keyword id="KW-0805">Transcription regulation</keyword>
<keyword id="KW-0862">Zinc</keyword>
<keyword id="KW-0863">Zinc-finger</keyword>
<name>NRDR_CORJK</name>
<comment type="function">
    <text evidence="1">Negatively regulates transcription of bacterial ribonucleotide reductase nrd genes and operons by binding to NrdR-boxes.</text>
</comment>
<comment type="cofactor">
    <cofactor evidence="1">
        <name>Zn(2+)</name>
        <dbReference type="ChEBI" id="CHEBI:29105"/>
    </cofactor>
    <text evidence="1">Binds 1 zinc ion.</text>
</comment>
<comment type="similarity">
    <text evidence="1">Belongs to the NrdR family.</text>
</comment>
<reference key="1">
    <citation type="journal article" date="2005" name="J. Bacteriol.">
        <title>Complete genome sequence and analysis of the multiresistant nosocomial pathogen Corynebacterium jeikeium K411, a lipid-requiring bacterium of the human skin flora.</title>
        <authorList>
            <person name="Tauch A."/>
            <person name="Kaiser O."/>
            <person name="Hain T."/>
            <person name="Goesmann A."/>
            <person name="Weisshaar B."/>
            <person name="Albersmeier A."/>
            <person name="Bekel T."/>
            <person name="Bischoff N."/>
            <person name="Brune I."/>
            <person name="Chakraborty T."/>
            <person name="Kalinowski J."/>
            <person name="Meyer F."/>
            <person name="Rupp O."/>
            <person name="Schneiker S."/>
            <person name="Viehoever P."/>
            <person name="Puehler A."/>
        </authorList>
    </citation>
    <scope>NUCLEOTIDE SEQUENCE [LARGE SCALE GENOMIC DNA]</scope>
    <source>
        <strain>K411</strain>
    </source>
</reference>
<feature type="chain" id="PRO_0000264171" description="Transcriptional repressor NrdR">
    <location>
        <begin position="1"/>
        <end position="163"/>
    </location>
</feature>
<feature type="domain" description="ATP-cone" evidence="1">
    <location>
        <begin position="46"/>
        <end position="136"/>
    </location>
</feature>
<feature type="zinc finger region" evidence="1">
    <location>
        <begin position="3"/>
        <end position="34"/>
    </location>
</feature>
<sequence length="163" mass="18279">MLCPSCNSESSRVVDSRSIEMGVSIRRRRECSECQTRFTTIERSVLLVVKRNGVTEEFSREKVIKGVRRACQGRDVSDDALKRLAHEVEQAVRVAHGSQVPANQIGLAILDPLRTLDEVAYLRFASVYKSFNCAEDFEQEIESLRAHRQALAAPPVGDNSEDN</sequence>
<evidence type="ECO:0000255" key="1">
    <source>
        <dbReference type="HAMAP-Rule" id="MF_00440"/>
    </source>
</evidence>
<protein>
    <recommendedName>
        <fullName evidence="1">Transcriptional repressor NrdR</fullName>
    </recommendedName>
</protein>
<proteinExistence type="inferred from homology"/>
<dbReference type="EMBL" id="CR931997">
    <property type="protein sequence ID" value="CAI37269.1"/>
    <property type="molecule type" value="Genomic_DNA"/>
</dbReference>
<dbReference type="RefSeq" id="WP_011273655.1">
    <property type="nucleotide sequence ID" value="NC_007164.1"/>
</dbReference>
<dbReference type="SMR" id="Q4JV88"/>
<dbReference type="STRING" id="306537.jk1105"/>
<dbReference type="GeneID" id="92738625"/>
<dbReference type="KEGG" id="cjk:jk1105"/>
<dbReference type="PATRIC" id="fig|306537.10.peg.1118"/>
<dbReference type="eggNOG" id="COG1327">
    <property type="taxonomic scope" value="Bacteria"/>
</dbReference>
<dbReference type="HOGENOM" id="CLU_108412_1_0_11"/>
<dbReference type="OrthoDB" id="9807461at2"/>
<dbReference type="Proteomes" id="UP000000545">
    <property type="component" value="Chromosome"/>
</dbReference>
<dbReference type="GO" id="GO:0005524">
    <property type="term" value="F:ATP binding"/>
    <property type="evidence" value="ECO:0007669"/>
    <property type="project" value="UniProtKB-KW"/>
</dbReference>
<dbReference type="GO" id="GO:0003677">
    <property type="term" value="F:DNA binding"/>
    <property type="evidence" value="ECO:0007669"/>
    <property type="project" value="UniProtKB-KW"/>
</dbReference>
<dbReference type="GO" id="GO:0008270">
    <property type="term" value="F:zinc ion binding"/>
    <property type="evidence" value="ECO:0007669"/>
    <property type="project" value="UniProtKB-UniRule"/>
</dbReference>
<dbReference type="GO" id="GO:0045892">
    <property type="term" value="P:negative regulation of DNA-templated transcription"/>
    <property type="evidence" value="ECO:0007669"/>
    <property type="project" value="UniProtKB-UniRule"/>
</dbReference>
<dbReference type="HAMAP" id="MF_00440">
    <property type="entry name" value="NrdR"/>
    <property type="match status" value="1"/>
</dbReference>
<dbReference type="InterPro" id="IPR005144">
    <property type="entry name" value="ATP-cone_dom"/>
</dbReference>
<dbReference type="InterPro" id="IPR055173">
    <property type="entry name" value="NrdR-like_N"/>
</dbReference>
<dbReference type="InterPro" id="IPR003796">
    <property type="entry name" value="RNR_NrdR-like"/>
</dbReference>
<dbReference type="NCBIfam" id="TIGR00244">
    <property type="entry name" value="transcriptional regulator NrdR"/>
    <property type="match status" value="1"/>
</dbReference>
<dbReference type="PANTHER" id="PTHR30455">
    <property type="entry name" value="TRANSCRIPTIONAL REPRESSOR NRDR"/>
    <property type="match status" value="1"/>
</dbReference>
<dbReference type="PANTHER" id="PTHR30455:SF2">
    <property type="entry name" value="TRANSCRIPTIONAL REPRESSOR NRDR"/>
    <property type="match status" value="1"/>
</dbReference>
<dbReference type="Pfam" id="PF03477">
    <property type="entry name" value="ATP-cone"/>
    <property type="match status" value="1"/>
</dbReference>
<dbReference type="Pfam" id="PF22811">
    <property type="entry name" value="Zn_ribbon_NrdR"/>
    <property type="match status" value="1"/>
</dbReference>
<dbReference type="PROSITE" id="PS51161">
    <property type="entry name" value="ATP_CONE"/>
    <property type="match status" value="1"/>
</dbReference>
<accession>Q4JV88</accession>